<gene>
    <name type="primary">Gpr27</name>
    <name type="synonym">Sreb1</name>
</gene>
<feature type="chain" id="PRO_0000069550" description="Probable G-protein coupled receptor 27">
    <location>
        <begin position="1"/>
        <end position="377"/>
    </location>
</feature>
<feature type="topological domain" description="Extracellular" evidence="2">
    <location>
        <begin position="1"/>
        <end position="24"/>
    </location>
</feature>
<feature type="transmembrane region" description="Helical; Name=1" evidence="2">
    <location>
        <begin position="25"/>
        <end position="45"/>
    </location>
</feature>
<feature type="topological domain" description="Cytoplasmic" evidence="2">
    <location>
        <begin position="46"/>
        <end position="56"/>
    </location>
</feature>
<feature type="transmembrane region" description="Helical; Name=2" evidence="2">
    <location>
        <begin position="57"/>
        <end position="77"/>
    </location>
</feature>
<feature type="topological domain" description="Extracellular" evidence="2">
    <location>
        <begin position="78"/>
        <end position="98"/>
    </location>
</feature>
<feature type="transmembrane region" description="Helical; Name=3" evidence="2">
    <location>
        <begin position="99"/>
        <end position="119"/>
    </location>
</feature>
<feature type="topological domain" description="Cytoplasmic" evidence="2">
    <location>
        <begin position="120"/>
        <end position="140"/>
    </location>
</feature>
<feature type="transmembrane region" description="Helical; Name=4" evidence="2">
    <location>
        <begin position="141"/>
        <end position="161"/>
    </location>
</feature>
<feature type="topological domain" description="Extracellular" evidence="2">
    <location>
        <begin position="162"/>
        <end position="183"/>
    </location>
</feature>
<feature type="transmembrane region" description="Helical; Name=5" evidence="2">
    <location>
        <begin position="184"/>
        <end position="204"/>
    </location>
</feature>
<feature type="topological domain" description="Cytoplasmic" evidence="2">
    <location>
        <begin position="205"/>
        <end position="287"/>
    </location>
</feature>
<feature type="transmembrane region" description="Helical; Name=6" evidence="2">
    <location>
        <begin position="288"/>
        <end position="308"/>
    </location>
</feature>
<feature type="topological domain" description="Extracellular" evidence="2">
    <location>
        <begin position="309"/>
        <end position="322"/>
    </location>
</feature>
<feature type="transmembrane region" description="Helical; Name=7" evidence="2">
    <location>
        <begin position="323"/>
        <end position="343"/>
    </location>
</feature>
<feature type="topological domain" description="Cytoplasmic" evidence="2">
    <location>
        <begin position="344"/>
        <end position="377"/>
    </location>
</feature>
<feature type="glycosylation site" description="N-linked (GlcNAc...) asparagine" evidence="2">
    <location>
        <position position="3"/>
    </location>
</feature>
<feature type="disulfide bond" evidence="3">
    <location>
        <begin position="96"/>
        <end position="173"/>
    </location>
</feature>
<reference key="1">
    <citation type="journal article" date="2000" name="Biochem. Biophys. Res. Commun.">
        <title>An evolutionarily conserved G-protein coupled receptor family, SREB, expressed in the central nervous system.</title>
        <authorList>
            <person name="Matsumoto M."/>
            <person name="Saito T."/>
            <person name="Takasaki J."/>
            <person name="Kamohara M."/>
            <person name="Sugimoto T."/>
            <person name="Kobayashi M."/>
            <person name="Tadokoro M."/>
            <person name="Matsumoto S."/>
            <person name="Ohishi T."/>
            <person name="Furuichi K."/>
        </authorList>
    </citation>
    <scope>NUCLEOTIDE SEQUENCE [MRNA]</scope>
    <source>
        <tissue>Brain</tissue>
    </source>
</reference>
<reference key="2">
    <citation type="journal article" date="1998" name="Genomics">
        <title>Discovery of three novel G-protein-coupled receptor genes.</title>
        <authorList>
            <person name="O'Dowd B.F."/>
            <person name="Nguyen T."/>
            <person name="Marchese A."/>
            <person name="Cheng R."/>
            <person name="Lynch K.R."/>
            <person name="Heng H.H.Q."/>
            <person name="Kolakowski L.F. Jr."/>
            <person name="George S.R."/>
        </authorList>
    </citation>
    <scope>TISSUE SPECIFICITY</scope>
</reference>
<dbReference type="EMBL" id="AB040802">
    <property type="protein sequence ID" value="BAA96648.1"/>
    <property type="molecule type" value="mRNA"/>
</dbReference>
<dbReference type="RefSeq" id="NP_075587.1">
    <property type="nucleotide sequence ID" value="NM_023099.1"/>
</dbReference>
<dbReference type="SMR" id="Q9JJH3"/>
<dbReference type="FunCoup" id="Q9JJH3">
    <property type="interactions" value="179"/>
</dbReference>
<dbReference type="STRING" id="10116.ENSRNOP00000014455"/>
<dbReference type="GlyCosmos" id="Q9JJH3">
    <property type="glycosylation" value="1 site, No reported glycans"/>
</dbReference>
<dbReference type="GlyGen" id="Q9JJH3">
    <property type="glycosylation" value="2 sites"/>
</dbReference>
<dbReference type="PhosphoSitePlus" id="Q9JJH3"/>
<dbReference type="PaxDb" id="10116-ENSRNOP00000014455"/>
<dbReference type="Ensembl" id="ENSRNOT00000014455.3">
    <property type="protein sequence ID" value="ENSRNOP00000014455.1"/>
    <property type="gene ID" value="ENSRNOG00000010880.3"/>
</dbReference>
<dbReference type="GeneID" id="65275"/>
<dbReference type="KEGG" id="rno:65275"/>
<dbReference type="UCSC" id="RGD:71067">
    <property type="organism name" value="rat"/>
</dbReference>
<dbReference type="AGR" id="RGD:71067"/>
<dbReference type="CTD" id="2850"/>
<dbReference type="RGD" id="71067">
    <property type="gene designation" value="Gpr27"/>
</dbReference>
<dbReference type="eggNOG" id="KOG3656">
    <property type="taxonomic scope" value="Eukaryota"/>
</dbReference>
<dbReference type="GeneTree" id="ENSGT00890000139436"/>
<dbReference type="HOGENOM" id="CLU_055518_0_0_1"/>
<dbReference type="InParanoid" id="Q9JJH3"/>
<dbReference type="OMA" id="CIFEHRH"/>
<dbReference type="OrthoDB" id="6129346at2759"/>
<dbReference type="PhylomeDB" id="Q9JJH3"/>
<dbReference type="TreeFam" id="TF331163"/>
<dbReference type="PRO" id="PR:Q9JJH3"/>
<dbReference type="Proteomes" id="UP000002494">
    <property type="component" value="Chromosome 4"/>
</dbReference>
<dbReference type="Bgee" id="ENSRNOG00000010880">
    <property type="expression patterns" value="Expressed in frontal cortex and 14 other cell types or tissues"/>
</dbReference>
<dbReference type="GO" id="GO:0005886">
    <property type="term" value="C:plasma membrane"/>
    <property type="evidence" value="ECO:0000266"/>
    <property type="project" value="RGD"/>
</dbReference>
<dbReference type="GO" id="GO:0004930">
    <property type="term" value="F:G protein-coupled receptor activity"/>
    <property type="evidence" value="ECO:0000318"/>
    <property type="project" value="GO_Central"/>
</dbReference>
<dbReference type="GO" id="GO:0035774">
    <property type="term" value="P:positive regulation of insulin secretion involved in cellular response to glucose stimulus"/>
    <property type="evidence" value="ECO:0000266"/>
    <property type="project" value="RGD"/>
</dbReference>
<dbReference type="GO" id="GO:1900738">
    <property type="term" value="P:positive regulation of phospholipase C-activating G protein-coupled receptor signaling pathway"/>
    <property type="evidence" value="ECO:0000266"/>
    <property type="project" value="RGD"/>
</dbReference>
<dbReference type="FunFam" id="1.20.1070.10:FF:000074">
    <property type="entry name" value="probable G-protein coupled receptor 173"/>
    <property type="match status" value="1"/>
</dbReference>
<dbReference type="Gene3D" id="1.20.1070.10">
    <property type="entry name" value="Rhodopsin 7-helix transmembrane proteins"/>
    <property type="match status" value="1"/>
</dbReference>
<dbReference type="InterPro" id="IPR051509">
    <property type="entry name" value="GPCR_Orphan/Phoenixin"/>
</dbReference>
<dbReference type="InterPro" id="IPR000276">
    <property type="entry name" value="GPCR_Rhodpsn"/>
</dbReference>
<dbReference type="InterPro" id="IPR017452">
    <property type="entry name" value="GPCR_Rhodpsn_7TM"/>
</dbReference>
<dbReference type="PANTHER" id="PTHR19268">
    <property type="entry name" value="G PROTEIN-COUPLED RECEPTOR"/>
    <property type="match status" value="1"/>
</dbReference>
<dbReference type="PANTHER" id="PTHR19268:SF8">
    <property type="entry name" value="G-PROTEIN COUPLED RECEPTOR 27-RELATED"/>
    <property type="match status" value="1"/>
</dbReference>
<dbReference type="Pfam" id="PF00001">
    <property type="entry name" value="7tm_1"/>
    <property type="match status" value="1"/>
</dbReference>
<dbReference type="PRINTS" id="PR00237">
    <property type="entry name" value="GPCRRHODOPSN"/>
</dbReference>
<dbReference type="SUPFAM" id="SSF81321">
    <property type="entry name" value="Family A G protein-coupled receptor-like"/>
    <property type="match status" value="1"/>
</dbReference>
<dbReference type="PROSITE" id="PS50262">
    <property type="entry name" value="G_PROTEIN_RECEP_F1_2"/>
    <property type="match status" value="1"/>
</dbReference>
<proteinExistence type="evidence at transcript level"/>
<organism>
    <name type="scientific">Rattus norvegicus</name>
    <name type="common">Rat</name>
    <dbReference type="NCBI Taxonomy" id="10116"/>
    <lineage>
        <taxon>Eukaryota</taxon>
        <taxon>Metazoa</taxon>
        <taxon>Chordata</taxon>
        <taxon>Craniata</taxon>
        <taxon>Vertebrata</taxon>
        <taxon>Euteleostomi</taxon>
        <taxon>Mammalia</taxon>
        <taxon>Eutheria</taxon>
        <taxon>Euarchontoglires</taxon>
        <taxon>Glires</taxon>
        <taxon>Rodentia</taxon>
        <taxon>Myomorpha</taxon>
        <taxon>Muroidea</taxon>
        <taxon>Muridae</taxon>
        <taxon>Murinae</taxon>
        <taxon>Rattus</taxon>
    </lineage>
</organism>
<comment type="function">
    <text evidence="1">Orphan receptor. Possible candidate for amine-like G-protein coupled receptor (By similarity).</text>
</comment>
<comment type="subcellular location">
    <subcellularLocation>
        <location evidence="1">Cell membrane</location>
        <topology evidence="1">Multi-pass membrane protein</topology>
    </subcellularLocation>
</comment>
<comment type="tissue specificity">
    <text evidence="4">Expressed as a 3.0 kb transcript, in whole brain, hippocampus, striatum, frontal cortex, thalamus, pons and hypothalamus. A lower molecular weight transcript was detected in all regions examined, except the hypothalamus.</text>
</comment>
<comment type="similarity">
    <text evidence="3">Belongs to the G-protein coupled receptor 1 family.</text>
</comment>
<keyword id="KW-1003">Cell membrane</keyword>
<keyword id="KW-1015">Disulfide bond</keyword>
<keyword id="KW-0297">G-protein coupled receptor</keyword>
<keyword id="KW-0325">Glycoprotein</keyword>
<keyword id="KW-0472">Membrane</keyword>
<keyword id="KW-0675">Receptor</keyword>
<keyword id="KW-1185">Reference proteome</keyword>
<keyword id="KW-0807">Transducer</keyword>
<keyword id="KW-0812">Transmembrane</keyword>
<keyword id="KW-1133">Transmembrane helix</keyword>
<sequence>MANASEPGGGGGGAEAAALGLRLATLSLLLCVSLAGNVLFALLIVRERSLHRAPYYLLLDLCLADGLRALACLPAVMLAARRAAAAAGTPPGALGCKLLAFLAALFCFHAAFLLLGVGVTRYLAIAHHRFYAERLAGWPCAAMLVCAAWALALAAAFPPVLDGGGADDEDAPCALEQRPDGAPGALGFLLLLAAVVGATHLVYLRLLFFIHDRRKMRPARLVPAVSHDWTFHGPGATGQAAANWTAGFGRGPTPPALVGIRPAGPGRGARRLLVLEEFKTEKRLCKMFYAITLLFLLLWGPYVVASYLRVLVRPGAVPQAYLTASVWLTFAQAGINPVVCFLFNRELRDCFRAQFPCCQSPQATQATLPCDLKGIGL</sequence>
<evidence type="ECO:0000250" key="1"/>
<evidence type="ECO:0000255" key="2"/>
<evidence type="ECO:0000255" key="3">
    <source>
        <dbReference type="PROSITE-ProRule" id="PRU00521"/>
    </source>
</evidence>
<evidence type="ECO:0000269" key="4">
    <source>
    </source>
</evidence>
<accession>Q9JJH3</accession>
<protein>
    <recommendedName>
        <fullName>Probable G-protein coupled receptor 27</fullName>
    </recommendedName>
    <alternativeName>
        <fullName>Super conserved receptor expressed in brain 1</fullName>
    </alternativeName>
</protein>
<name>GPR27_RAT</name>